<comment type="function">
    <text evidence="1">Condenses 4-methyl-5-(beta-hydroxyethyl)thiazole monophosphate (THZ-P) and 2-methyl-4-amino-5-hydroxymethyl pyrimidine pyrophosphate (HMP-PP) to form thiamine monophosphate (TMP).</text>
</comment>
<comment type="catalytic activity">
    <reaction evidence="1">
        <text>2-[(2R,5Z)-2-carboxy-4-methylthiazol-5(2H)-ylidene]ethyl phosphate + 4-amino-2-methyl-5-(diphosphooxymethyl)pyrimidine + 2 H(+) = thiamine phosphate + CO2 + diphosphate</text>
        <dbReference type="Rhea" id="RHEA:47844"/>
        <dbReference type="ChEBI" id="CHEBI:15378"/>
        <dbReference type="ChEBI" id="CHEBI:16526"/>
        <dbReference type="ChEBI" id="CHEBI:33019"/>
        <dbReference type="ChEBI" id="CHEBI:37575"/>
        <dbReference type="ChEBI" id="CHEBI:57841"/>
        <dbReference type="ChEBI" id="CHEBI:62899"/>
        <dbReference type="EC" id="2.5.1.3"/>
    </reaction>
</comment>
<comment type="catalytic activity">
    <reaction evidence="1">
        <text>2-(2-carboxy-4-methylthiazol-5-yl)ethyl phosphate + 4-amino-2-methyl-5-(diphosphooxymethyl)pyrimidine + 2 H(+) = thiamine phosphate + CO2 + diphosphate</text>
        <dbReference type="Rhea" id="RHEA:47848"/>
        <dbReference type="ChEBI" id="CHEBI:15378"/>
        <dbReference type="ChEBI" id="CHEBI:16526"/>
        <dbReference type="ChEBI" id="CHEBI:33019"/>
        <dbReference type="ChEBI" id="CHEBI:37575"/>
        <dbReference type="ChEBI" id="CHEBI:57841"/>
        <dbReference type="ChEBI" id="CHEBI:62890"/>
        <dbReference type="EC" id="2.5.1.3"/>
    </reaction>
</comment>
<comment type="catalytic activity">
    <reaction evidence="1">
        <text>4-methyl-5-(2-phosphooxyethyl)-thiazole + 4-amino-2-methyl-5-(diphosphooxymethyl)pyrimidine + H(+) = thiamine phosphate + diphosphate</text>
        <dbReference type="Rhea" id="RHEA:22328"/>
        <dbReference type="ChEBI" id="CHEBI:15378"/>
        <dbReference type="ChEBI" id="CHEBI:33019"/>
        <dbReference type="ChEBI" id="CHEBI:37575"/>
        <dbReference type="ChEBI" id="CHEBI:57841"/>
        <dbReference type="ChEBI" id="CHEBI:58296"/>
        <dbReference type="EC" id="2.5.1.3"/>
    </reaction>
</comment>
<comment type="cofactor">
    <cofactor evidence="1">
        <name>Mg(2+)</name>
        <dbReference type="ChEBI" id="CHEBI:18420"/>
    </cofactor>
    <text evidence="1">Binds 1 Mg(2+) ion per subunit.</text>
</comment>
<comment type="pathway">
    <text evidence="1">Cofactor biosynthesis; thiamine diphosphate biosynthesis; thiamine phosphate from 4-amino-2-methyl-5-diphosphomethylpyrimidine and 4-methyl-5-(2-phosphoethyl)-thiazole: step 1/1.</text>
</comment>
<comment type="similarity">
    <text evidence="1">Belongs to the thiamine-phosphate synthase family.</text>
</comment>
<organism>
    <name type="scientific">Pelagibacter ubique (strain HTCC1062)</name>
    <dbReference type="NCBI Taxonomy" id="335992"/>
    <lineage>
        <taxon>Bacteria</taxon>
        <taxon>Pseudomonadati</taxon>
        <taxon>Pseudomonadota</taxon>
        <taxon>Alphaproteobacteria</taxon>
        <taxon>Candidatus Pelagibacterales</taxon>
        <taxon>Candidatus Pelagibacteraceae</taxon>
        <taxon>Candidatus Pelagibacter</taxon>
    </lineage>
</organism>
<sequence>MKQNKINKKFVYLISPNKIPDINFYDDLALVLSSKKISFFQLRLKKETNLNKLIIGKKIKKICNKHKVKFLINDDPLLAKKLNADGCHLGQKDMDLIKARKILKNKIIGVTCHNSINLAKKAINDGADYLAFGAFYATKTKTVKYRASLTVLKSIKKITSLPIVAIGGIKLSNYKKLLLNKANFLAISGYIWNNKKYKPLEAIRKLK</sequence>
<protein>
    <recommendedName>
        <fullName evidence="1">Thiamine-phosphate synthase</fullName>
        <shortName evidence="1">TP synthase</shortName>
        <shortName evidence="1">TPS</shortName>
        <ecNumber evidence="1">2.5.1.3</ecNumber>
    </recommendedName>
    <alternativeName>
        <fullName evidence="1">Thiamine-phosphate pyrophosphorylase</fullName>
        <shortName evidence="1">TMP pyrophosphorylase</shortName>
        <shortName evidence="1">TMP-PPase</shortName>
    </alternativeName>
</protein>
<reference key="1">
    <citation type="journal article" date="2005" name="Science">
        <title>Genome streamlining in a cosmopolitan oceanic bacterium.</title>
        <authorList>
            <person name="Giovannoni S.J."/>
            <person name="Tripp H.J."/>
            <person name="Givan S."/>
            <person name="Podar M."/>
            <person name="Vergin K.L."/>
            <person name="Baptista D."/>
            <person name="Bibbs L."/>
            <person name="Eads J."/>
            <person name="Richardson T.H."/>
            <person name="Noordewier M."/>
            <person name="Rappe M.S."/>
            <person name="Short J.M."/>
            <person name="Carrington J.C."/>
            <person name="Mathur E.J."/>
        </authorList>
    </citation>
    <scope>NUCLEOTIDE SEQUENCE [LARGE SCALE GENOMIC DNA]</scope>
    <source>
        <strain>HTCC1062</strain>
    </source>
</reference>
<name>THIE_PELUB</name>
<feature type="chain" id="PRO_1000117300" description="Thiamine-phosphate synthase">
    <location>
        <begin position="1"/>
        <end position="207"/>
    </location>
</feature>
<feature type="binding site" evidence="1">
    <location>
        <begin position="41"/>
        <end position="45"/>
    </location>
    <ligand>
        <name>4-amino-2-methyl-5-(diphosphooxymethyl)pyrimidine</name>
        <dbReference type="ChEBI" id="CHEBI:57841"/>
    </ligand>
</feature>
<feature type="binding site" evidence="1">
    <location>
        <position position="73"/>
    </location>
    <ligand>
        <name>4-amino-2-methyl-5-(diphosphooxymethyl)pyrimidine</name>
        <dbReference type="ChEBI" id="CHEBI:57841"/>
    </ligand>
</feature>
<feature type="binding site" evidence="1">
    <location>
        <position position="74"/>
    </location>
    <ligand>
        <name>Mg(2+)</name>
        <dbReference type="ChEBI" id="CHEBI:18420"/>
    </ligand>
</feature>
<feature type="binding site" evidence="1">
    <location>
        <position position="93"/>
    </location>
    <ligand>
        <name>Mg(2+)</name>
        <dbReference type="ChEBI" id="CHEBI:18420"/>
    </ligand>
</feature>
<feature type="binding site" evidence="1">
    <location>
        <position position="111"/>
    </location>
    <ligand>
        <name>4-amino-2-methyl-5-(diphosphooxymethyl)pyrimidine</name>
        <dbReference type="ChEBI" id="CHEBI:57841"/>
    </ligand>
</feature>
<feature type="binding site" evidence="1">
    <location>
        <begin position="138"/>
        <end position="140"/>
    </location>
    <ligand>
        <name>2-[(2R,5Z)-2-carboxy-4-methylthiazol-5(2H)-ylidene]ethyl phosphate</name>
        <dbReference type="ChEBI" id="CHEBI:62899"/>
    </ligand>
</feature>
<feature type="binding site" evidence="1">
    <location>
        <position position="141"/>
    </location>
    <ligand>
        <name>4-amino-2-methyl-5-(diphosphooxymethyl)pyrimidine</name>
        <dbReference type="ChEBI" id="CHEBI:57841"/>
    </ligand>
</feature>
<feature type="binding site" evidence="1">
    <location>
        <position position="168"/>
    </location>
    <ligand>
        <name>2-[(2R,5Z)-2-carboxy-4-methylthiazol-5(2H)-ylidene]ethyl phosphate</name>
        <dbReference type="ChEBI" id="CHEBI:62899"/>
    </ligand>
</feature>
<keyword id="KW-0460">Magnesium</keyword>
<keyword id="KW-0479">Metal-binding</keyword>
<keyword id="KW-1185">Reference proteome</keyword>
<keyword id="KW-0784">Thiamine biosynthesis</keyword>
<keyword id="KW-0808">Transferase</keyword>
<evidence type="ECO:0000255" key="1">
    <source>
        <dbReference type="HAMAP-Rule" id="MF_00097"/>
    </source>
</evidence>
<accession>Q4FN35</accession>
<gene>
    <name evidence="1" type="primary">thiE</name>
    <name type="ordered locus">SAR11_0583</name>
</gene>
<proteinExistence type="inferred from homology"/>
<dbReference type="EC" id="2.5.1.3" evidence="1"/>
<dbReference type="EMBL" id="CP000084">
    <property type="protein sequence ID" value="AAZ21404.1"/>
    <property type="molecule type" value="Genomic_DNA"/>
</dbReference>
<dbReference type="RefSeq" id="WP_011281792.1">
    <property type="nucleotide sequence ID" value="NC_007205.1"/>
</dbReference>
<dbReference type="SMR" id="Q4FN35"/>
<dbReference type="STRING" id="335992.SAR11_0583"/>
<dbReference type="GeneID" id="66295088"/>
<dbReference type="KEGG" id="pub:SAR11_0583"/>
<dbReference type="eggNOG" id="COG0352">
    <property type="taxonomic scope" value="Bacteria"/>
</dbReference>
<dbReference type="HOGENOM" id="CLU_018272_3_1_5"/>
<dbReference type="OrthoDB" id="7159061at2"/>
<dbReference type="UniPathway" id="UPA00060">
    <property type="reaction ID" value="UER00141"/>
</dbReference>
<dbReference type="Proteomes" id="UP000002528">
    <property type="component" value="Chromosome"/>
</dbReference>
<dbReference type="GO" id="GO:0005737">
    <property type="term" value="C:cytoplasm"/>
    <property type="evidence" value="ECO:0007669"/>
    <property type="project" value="TreeGrafter"/>
</dbReference>
<dbReference type="GO" id="GO:0000287">
    <property type="term" value="F:magnesium ion binding"/>
    <property type="evidence" value="ECO:0007669"/>
    <property type="project" value="UniProtKB-UniRule"/>
</dbReference>
<dbReference type="GO" id="GO:0004789">
    <property type="term" value="F:thiamine-phosphate diphosphorylase activity"/>
    <property type="evidence" value="ECO:0007669"/>
    <property type="project" value="UniProtKB-UniRule"/>
</dbReference>
<dbReference type="GO" id="GO:0009228">
    <property type="term" value="P:thiamine biosynthetic process"/>
    <property type="evidence" value="ECO:0007669"/>
    <property type="project" value="UniProtKB-KW"/>
</dbReference>
<dbReference type="GO" id="GO:0009229">
    <property type="term" value="P:thiamine diphosphate biosynthetic process"/>
    <property type="evidence" value="ECO:0007669"/>
    <property type="project" value="UniProtKB-UniRule"/>
</dbReference>
<dbReference type="CDD" id="cd00564">
    <property type="entry name" value="TMP_TenI"/>
    <property type="match status" value="1"/>
</dbReference>
<dbReference type="Gene3D" id="3.20.20.70">
    <property type="entry name" value="Aldolase class I"/>
    <property type="match status" value="1"/>
</dbReference>
<dbReference type="HAMAP" id="MF_00097">
    <property type="entry name" value="TMP_synthase"/>
    <property type="match status" value="1"/>
</dbReference>
<dbReference type="InterPro" id="IPR013785">
    <property type="entry name" value="Aldolase_TIM"/>
</dbReference>
<dbReference type="InterPro" id="IPR036206">
    <property type="entry name" value="ThiamineP_synth_sf"/>
</dbReference>
<dbReference type="InterPro" id="IPR022998">
    <property type="entry name" value="ThiamineP_synth_TenI"/>
</dbReference>
<dbReference type="InterPro" id="IPR034291">
    <property type="entry name" value="TMP_synthase"/>
</dbReference>
<dbReference type="NCBIfam" id="TIGR00693">
    <property type="entry name" value="thiE"/>
    <property type="match status" value="1"/>
</dbReference>
<dbReference type="PANTHER" id="PTHR20857:SF23">
    <property type="entry name" value="THIAMINE BIOSYNTHETIC BIFUNCTIONAL ENZYME"/>
    <property type="match status" value="1"/>
</dbReference>
<dbReference type="PANTHER" id="PTHR20857">
    <property type="entry name" value="THIAMINE-PHOSPHATE PYROPHOSPHORYLASE"/>
    <property type="match status" value="1"/>
</dbReference>
<dbReference type="Pfam" id="PF02581">
    <property type="entry name" value="TMP-TENI"/>
    <property type="match status" value="1"/>
</dbReference>
<dbReference type="SUPFAM" id="SSF51391">
    <property type="entry name" value="Thiamin phosphate synthase"/>
    <property type="match status" value="1"/>
</dbReference>